<keyword id="KW-1064">Adaptive immunity</keyword>
<keyword id="KW-0903">Direct protein sequencing</keyword>
<keyword id="KW-1015">Disulfide bond</keyword>
<keyword id="KW-0391">Immunity</keyword>
<keyword id="KW-1280">Immunoglobulin</keyword>
<keyword id="KW-1185">Reference proteome</keyword>
<sequence length="113" mass="12675">EVKLEESGGGLVQPGGSMKLSCVASGFTFSNYWMNWVRQSPEKGLEWVAEIRLKSHNYATHYAESVKGRFTISRDDSKSSVYLQMNNLRAEDTGIYYCTTGFAYWGQGTLVTV</sequence>
<organism>
    <name type="scientific">Mus musculus</name>
    <name type="common">Mouse</name>
    <dbReference type="NCBI Taxonomy" id="10090"/>
    <lineage>
        <taxon>Eukaryota</taxon>
        <taxon>Metazoa</taxon>
        <taxon>Chordata</taxon>
        <taxon>Craniata</taxon>
        <taxon>Vertebrata</taxon>
        <taxon>Euteleostomi</taxon>
        <taxon>Mammalia</taxon>
        <taxon>Eutheria</taxon>
        <taxon>Euarchontoglires</taxon>
        <taxon>Glires</taxon>
        <taxon>Rodentia</taxon>
        <taxon>Myomorpha</taxon>
        <taxon>Muroidea</taxon>
        <taxon>Muridae</taxon>
        <taxon>Murinae</taxon>
        <taxon>Mus</taxon>
        <taxon>Mus</taxon>
    </lineage>
</organism>
<proteinExistence type="evidence at protein level"/>
<feature type="chain" id="PRO_0000059881" description="Ig heavy chain V-III region A4">
    <location>
        <begin position="1"/>
        <end position="113" status="greater than"/>
    </location>
</feature>
<feature type="domain" description="Ig-like">
    <location>
        <begin position="1"/>
        <end position="113" status="greater than"/>
    </location>
</feature>
<feature type="disulfide bond" evidence="1">
    <location>
        <begin position="22"/>
        <end position="98"/>
    </location>
</feature>
<feature type="non-terminal residue">
    <location>
        <position position="113"/>
    </location>
</feature>
<comment type="miscellaneous">
    <text>This chain was isolated from a myeloma protein that binds inulin.</text>
</comment>
<protein>
    <recommendedName>
        <fullName>Ig heavy chain V-III region A4</fullName>
    </recommendedName>
</protein>
<reference key="1">
    <citation type="journal article" date="1978" name="Proc. Natl. Acad. Sci. U.S.A.">
        <title>Sequence variation among heavy chains from inulin-binding myeloma proteins.</title>
        <authorList>
            <person name="Vrana M."/>
            <person name="Rudikoff S."/>
            <person name="Potter M."/>
        </authorList>
    </citation>
    <scope>PROTEIN SEQUENCE</scope>
</reference>
<evidence type="ECO:0000255" key="1">
    <source>
        <dbReference type="PROSITE-ProRule" id="PRU00114"/>
    </source>
</evidence>
<dbReference type="PIR" id="A93818">
    <property type="entry name" value="AVMSAB"/>
</dbReference>
<dbReference type="SMR" id="P01796"/>
<dbReference type="FunCoup" id="P01796">
    <property type="interactions" value="529"/>
</dbReference>
<dbReference type="InParanoid" id="P01796"/>
<dbReference type="Proteomes" id="UP000000589">
    <property type="component" value="Unplaced"/>
</dbReference>
<dbReference type="RNAct" id="P01796">
    <property type="molecule type" value="protein"/>
</dbReference>
<dbReference type="GO" id="GO:0005576">
    <property type="term" value="C:extracellular region"/>
    <property type="evidence" value="ECO:0007669"/>
    <property type="project" value="UniProtKB-ARBA"/>
</dbReference>
<dbReference type="GO" id="GO:0019814">
    <property type="term" value="C:immunoglobulin complex"/>
    <property type="evidence" value="ECO:0007669"/>
    <property type="project" value="UniProtKB-KW"/>
</dbReference>
<dbReference type="GO" id="GO:0003823">
    <property type="term" value="F:antigen binding"/>
    <property type="evidence" value="ECO:0000318"/>
    <property type="project" value="GO_Central"/>
</dbReference>
<dbReference type="GO" id="GO:0016064">
    <property type="term" value="P:immunoglobulin mediated immune response"/>
    <property type="evidence" value="ECO:0000318"/>
    <property type="project" value="GO_Central"/>
</dbReference>
<dbReference type="CDD" id="cd04981">
    <property type="entry name" value="IgV_H"/>
    <property type="match status" value="1"/>
</dbReference>
<dbReference type="FunFam" id="2.60.40.10:FF:001372">
    <property type="entry name" value="Ig heavy chain V region M603"/>
    <property type="match status" value="1"/>
</dbReference>
<dbReference type="Gene3D" id="2.60.40.10">
    <property type="entry name" value="Immunoglobulins"/>
    <property type="match status" value="1"/>
</dbReference>
<dbReference type="InterPro" id="IPR007110">
    <property type="entry name" value="Ig-like_dom"/>
</dbReference>
<dbReference type="InterPro" id="IPR036179">
    <property type="entry name" value="Ig-like_dom_sf"/>
</dbReference>
<dbReference type="InterPro" id="IPR013783">
    <property type="entry name" value="Ig-like_fold"/>
</dbReference>
<dbReference type="InterPro" id="IPR003599">
    <property type="entry name" value="Ig_sub"/>
</dbReference>
<dbReference type="InterPro" id="IPR013106">
    <property type="entry name" value="Ig_V-set"/>
</dbReference>
<dbReference type="InterPro" id="IPR050199">
    <property type="entry name" value="IgHV"/>
</dbReference>
<dbReference type="PANTHER" id="PTHR23266">
    <property type="entry name" value="IMMUNOGLOBULIN HEAVY CHAIN"/>
    <property type="match status" value="1"/>
</dbReference>
<dbReference type="Pfam" id="PF07686">
    <property type="entry name" value="V-set"/>
    <property type="match status" value="1"/>
</dbReference>
<dbReference type="SMART" id="SM00409">
    <property type="entry name" value="IG"/>
    <property type="match status" value="1"/>
</dbReference>
<dbReference type="SMART" id="SM00406">
    <property type="entry name" value="IGv"/>
    <property type="match status" value="1"/>
</dbReference>
<dbReference type="SUPFAM" id="SSF48726">
    <property type="entry name" value="Immunoglobulin"/>
    <property type="match status" value="1"/>
</dbReference>
<dbReference type="PROSITE" id="PS50835">
    <property type="entry name" value="IG_LIKE"/>
    <property type="match status" value="1"/>
</dbReference>
<accession>P01796</accession>
<name>HVM27_MOUSE</name>